<feature type="chain" id="PRO_0000196974" description="2,3,4,5-tetrahydropyridine-2,6-dicarboxylate N-succinyltransferase">
    <location>
        <begin position="1"/>
        <end position="273"/>
    </location>
</feature>
<feature type="binding site" evidence="1">
    <location>
        <position position="106"/>
    </location>
    <ligand>
        <name>substrate</name>
    </ligand>
</feature>
<feature type="binding site" evidence="1">
    <location>
        <position position="143"/>
    </location>
    <ligand>
        <name>substrate</name>
    </ligand>
</feature>
<reference key="1">
    <citation type="journal article" date="2004" name="PLoS Biol.">
        <title>Phylogenomics of the reproductive parasite Wolbachia pipientis wMel: a streamlined genome overrun by mobile genetic elements.</title>
        <authorList>
            <person name="Wu M."/>
            <person name="Sun L.V."/>
            <person name="Vamathevan J.J."/>
            <person name="Riegler M."/>
            <person name="DeBoy R.T."/>
            <person name="Brownlie J.C."/>
            <person name="McGraw E.A."/>
            <person name="Martin W."/>
            <person name="Esser C."/>
            <person name="Ahmadinejad N."/>
            <person name="Wiegand C."/>
            <person name="Madupu R."/>
            <person name="Beanan M.J."/>
            <person name="Brinkac L.M."/>
            <person name="Daugherty S.C."/>
            <person name="Durkin A.S."/>
            <person name="Kolonay J.F."/>
            <person name="Nelson W.C."/>
            <person name="Mohamoud Y."/>
            <person name="Lee P."/>
            <person name="Berry K.J."/>
            <person name="Young M.B."/>
            <person name="Utterback T.R."/>
            <person name="Weidman J.F."/>
            <person name="Nierman W.C."/>
            <person name="Paulsen I.T."/>
            <person name="Nelson K.E."/>
            <person name="Tettelin H."/>
            <person name="O'Neill S.L."/>
            <person name="Eisen J.A."/>
        </authorList>
    </citation>
    <scope>NUCLEOTIDE SEQUENCE [LARGE SCALE GENOMIC DNA]</scope>
</reference>
<comment type="catalytic activity">
    <reaction evidence="1">
        <text>(S)-2,3,4,5-tetrahydrodipicolinate + succinyl-CoA + H2O = (S)-2-succinylamino-6-oxoheptanedioate + CoA</text>
        <dbReference type="Rhea" id="RHEA:17325"/>
        <dbReference type="ChEBI" id="CHEBI:15377"/>
        <dbReference type="ChEBI" id="CHEBI:15685"/>
        <dbReference type="ChEBI" id="CHEBI:16845"/>
        <dbReference type="ChEBI" id="CHEBI:57287"/>
        <dbReference type="ChEBI" id="CHEBI:57292"/>
        <dbReference type="EC" id="2.3.1.117"/>
    </reaction>
</comment>
<comment type="pathway">
    <text evidence="1">Amino-acid biosynthesis; L-lysine biosynthesis via DAP pathway; LL-2,6-diaminopimelate from (S)-tetrahydrodipicolinate (succinylase route): step 1/3.</text>
</comment>
<comment type="subunit">
    <text evidence="1">Homotrimer.</text>
</comment>
<comment type="subcellular location">
    <subcellularLocation>
        <location evidence="1">Cytoplasm</location>
    </subcellularLocation>
</comment>
<comment type="similarity">
    <text evidence="1">Belongs to the transferase hexapeptide repeat family.</text>
</comment>
<comment type="sequence caution" evidence="2">
    <conflict type="erroneous initiation">
        <sequence resource="EMBL-CDS" id="AAS14407"/>
    </conflict>
</comment>
<accession>Q73H59</accession>
<organism>
    <name type="scientific">Wolbachia pipientis wMel</name>
    <dbReference type="NCBI Taxonomy" id="163164"/>
    <lineage>
        <taxon>Bacteria</taxon>
        <taxon>Pseudomonadati</taxon>
        <taxon>Pseudomonadota</taxon>
        <taxon>Alphaproteobacteria</taxon>
        <taxon>Rickettsiales</taxon>
        <taxon>Anaplasmataceae</taxon>
        <taxon>Wolbachieae</taxon>
        <taxon>Wolbachia</taxon>
    </lineage>
</organism>
<keyword id="KW-0012">Acyltransferase</keyword>
<keyword id="KW-0028">Amino-acid biosynthesis</keyword>
<keyword id="KW-0963">Cytoplasm</keyword>
<keyword id="KW-0220">Diaminopimelate biosynthesis</keyword>
<keyword id="KW-0457">Lysine biosynthesis</keyword>
<keyword id="KW-0677">Repeat</keyword>
<keyword id="KW-0808">Transferase</keyword>
<protein>
    <recommendedName>
        <fullName evidence="1">2,3,4,5-tetrahydropyridine-2,6-dicarboxylate N-succinyltransferase</fullName>
        <ecNumber evidence="1">2.3.1.117</ecNumber>
    </recommendedName>
    <alternativeName>
        <fullName evidence="1">Tetrahydrodipicolinate N-succinyltransferase</fullName>
        <shortName evidence="1">THDP succinyltransferase</shortName>
        <shortName evidence="1">THP succinyltransferase</shortName>
        <shortName evidence="1">Tetrahydropicolinate succinylase</shortName>
    </alternativeName>
</protein>
<gene>
    <name evidence="1" type="primary">dapD</name>
    <name type="ordered locus">WD_0714</name>
</gene>
<proteinExistence type="inferred from homology"/>
<evidence type="ECO:0000255" key="1">
    <source>
        <dbReference type="HAMAP-Rule" id="MF_00811"/>
    </source>
</evidence>
<evidence type="ECO:0000305" key="2"/>
<dbReference type="EC" id="2.3.1.117" evidence="1"/>
<dbReference type="EMBL" id="AE017196">
    <property type="protein sequence ID" value="AAS14407.1"/>
    <property type="status" value="ALT_INIT"/>
    <property type="molecule type" value="Genomic_DNA"/>
</dbReference>
<dbReference type="SMR" id="Q73H59"/>
<dbReference type="EnsemblBacteria" id="AAS14407">
    <property type="protein sequence ID" value="AAS14407"/>
    <property type="gene ID" value="WD_0714"/>
</dbReference>
<dbReference type="KEGG" id="wol:WD_0714"/>
<dbReference type="eggNOG" id="COG2171">
    <property type="taxonomic scope" value="Bacteria"/>
</dbReference>
<dbReference type="UniPathway" id="UPA00034">
    <property type="reaction ID" value="UER00019"/>
</dbReference>
<dbReference type="Proteomes" id="UP000008215">
    <property type="component" value="Chromosome"/>
</dbReference>
<dbReference type="GO" id="GO:0005737">
    <property type="term" value="C:cytoplasm"/>
    <property type="evidence" value="ECO:0007669"/>
    <property type="project" value="UniProtKB-SubCell"/>
</dbReference>
<dbReference type="GO" id="GO:0008666">
    <property type="term" value="F:2,3,4,5-tetrahydropyridine-2,6-dicarboxylate N-succinyltransferase activity"/>
    <property type="evidence" value="ECO:0007669"/>
    <property type="project" value="UniProtKB-UniRule"/>
</dbReference>
<dbReference type="GO" id="GO:0019877">
    <property type="term" value="P:diaminopimelate biosynthetic process"/>
    <property type="evidence" value="ECO:0007669"/>
    <property type="project" value="UniProtKB-UniRule"/>
</dbReference>
<dbReference type="GO" id="GO:0009089">
    <property type="term" value="P:lysine biosynthetic process via diaminopimelate"/>
    <property type="evidence" value="ECO:0007669"/>
    <property type="project" value="UniProtKB-UniRule"/>
</dbReference>
<dbReference type="CDD" id="cd03350">
    <property type="entry name" value="LbH_THP_succinylT"/>
    <property type="match status" value="1"/>
</dbReference>
<dbReference type="Gene3D" id="2.160.10.10">
    <property type="entry name" value="Hexapeptide repeat proteins"/>
    <property type="match status" value="1"/>
</dbReference>
<dbReference type="Gene3D" id="1.10.166.10">
    <property type="entry name" value="Tetrahydrodipicolinate-N-succinyltransferase, N-terminal domain"/>
    <property type="match status" value="1"/>
</dbReference>
<dbReference type="HAMAP" id="MF_00811">
    <property type="entry name" value="DapD"/>
    <property type="match status" value="1"/>
</dbReference>
<dbReference type="InterPro" id="IPR005664">
    <property type="entry name" value="DapD_Trfase_Hexpep_rpt_fam"/>
</dbReference>
<dbReference type="InterPro" id="IPR001451">
    <property type="entry name" value="Hexapep"/>
</dbReference>
<dbReference type="InterPro" id="IPR023180">
    <property type="entry name" value="THP_succinylTrfase_dom1"/>
</dbReference>
<dbReference type="InterPro" id="IPR037133">
    <property type="entry name" value="THP_succinylTrfase_N_sf"/>
</dbReference>
<dbReference type="InterPro" id="IPR050179">
    <property type="entry name" value="Trans_hexapeptide_repeat"/>
</dbReference>
<dbReference type="InterPro" id="IPR011004">
    <property type="entry name" value="Trimer_LpxA-like_sf"/>
</dbReference>
<dbReference type="NCBIfam" id="TIGR00965">
    <property type="entry name" value="dapD"/>
    <property type="match status" value="1"/>
</dbReference>
<dbReference type="NCBIfam" id="NF008808">
    <property type="entry name" value="PRK11830.1"/>
    <property type="match status" value="1"/>
</dbReference>
<dbReference type="PANTHER" id="PTHR43300:SF10">
    <property type="entry name" value="2,3,4,5-TETRAHYDROPYRIDINE-2,6-DICARBOXYLATE N-ACETYLTRANSFERASE"/>
    <property type="match status" value="1"/>
</dbReference>
<dbReference type="PANTHER" id="PTHR43300">
    <property type="entry name" value="ACETYLTRANSFERASE"/>
    <property type="match status" value="1"/>
</dbReference>
<dbReference type="Pfam" id="PF14602">
    <property type="entry name" value="Hexapep_2"/>
    <property type="match status" value="1"/>
</dbReference>
<dbReference type="Pfam" id="PF14805">
    <property type="entry name" value="THDPS_N_2"/>
    <property type="match status" value="1"/>
</dbReference>
<dbReference type="SUPFAM" id="SSF51161">
    <property type="entry name" value="Trimeric LpxA-like enzymes"/>
    <property type="match status" value="1"/>
</dbReference>
<name>DAPD_WOLPM</name>
<sequence>MQLKKTQSEIKDIWKNREKFNDCNLKKTARIAIKEVIELLDSGKIRVAEKLSSGEWVVHKWIKQAILLHFLTEENKIIDNTNCWFDKIGNKFSEWNEEKFRRLKIRAVPGCFVRRSAYIGTNVVLMPSFINVGAYVDSGTMIDTWSTIGSCAQIGKNCHISGGVGIGGVLEPIQASPVIIEDNCFIGARSEVAEGVVVREGSVLGIGVFIGASTKIIDRETSKVFYGEVPPYSVVVPGSIPSKNNISTYCAVIVKKVDEKTRSKISINEILRD</sequence>